<comment type="function">
    <text evidence="1">ATPase which is responsible for recognizing, binding, unfolding and translocation of substrate proteins into the archaeal 20S proteasome core particle. Is essential for opening the gate of the 20S proteasome via an interaction with its C-terminus, thereby allowing substrate entry and access to the site of proteolysis. Thus, the C-termini of the proteasomal ATPase function like a 'key in a lock' to induce gate opening and therefore regulate proteolysis. Unfolding activity requires energy from ATP hydrolysis, whereas ATP binding alone promotes ATPase-20S proteasome association which triggers gate opening, and supports translocation of unfolded substrates.</text>
</comment>
<comment type="subunit">
    <text evidence="1">Homohexamer. The hexameric complex has a two-ring architecture resembling a top hat that caps the 20S proteasome core at one or both ends. Upon ATP-binding, the C-terminus of PAN interacts with the alpha-rings of the proteasome core by binding to the intersubunit pockets.</text>
</comment>
<comment type="subcellular location">
    <subcellularLocation>
        <location evidence="1">Cytoplasm</location>
    </subcellularLocation>
</comment>
<comment type="domain">
    <text evidence="1">Consists of three main regions, an N-terminal coiled-coil domain that may assist in substrate recognition, an interdomain involved in PAN hexamerization, and a C-terminal ATPase domain of the AAA type.</text>
</comment>
<comment type="similarity">
    <text evidence="1">Belongs to the AAA ATPase family.</text>
</comment>
<name>PAN_METVS</name>
<accession>A6UQT3</accession>
<reference key="1">
    <citation type="submission" date="2007-06" db="EMBL/GenBank/DDBJ databases">
        <title>Complete sequence of Methanococcus vannielii SB.</title>
        <authorList>
            <consortium name="US DOE Joint Genome Institute"/>
            <person name="Copeland A."/>
            <person name="Lucas S."/>
            <person name="Lapidus A."/>
            <person name="Barry K."/>
            <person name="Glavina del Rio T."/>
            <person name="Dalin E."/>
            <person name="Tice H."/>
            <person name="Pitluck S."/>
            <person name="Chain P."/>
            <person name="Malfatti S."/>
            <person name="Shin M."/>
            <person name="Vergez L."/>
            <person name="Schmutz J."/>
            <person name="Larimer F."/>
            <person name="Land M."/>
            <person name="Hauser L."/>
            <person name="Kyrpides N."/>
            <person name="Anderson I."/>
            <person name="Sieprawska-Lupa M."/>
            <person name="Whitman W.B."/>
            <person name="Richardson P."/>
        </authorList>
    </citation>
    <scope>NUCLEOTIDE SEQUENCE [LARGE SCALE GENOMIC DNA]</scope>
    <source>
        <strain>ATCC 35089 / DSM 1224 / JCM 13029 / OCM 148 / SB</strain>
    </source>
</reference>
<organism>
    <name type="scientific">Methanococcus vannielii (strain ATCC 35089 / DSM 1224 / JCM 13029 / OCM 148 / SB)</name>
    <dbReference type="NCBI Taxonomy" id="406327"/>
    <lineage>
        <taxon>Archaea</taxon>
        <taxon>Methanobacteriati</taxon>
        <taxon>Methanobacteriota</taxon>
        <taxon>Methanomada group</taxon>
        <taxon>Methanococci</taxon>
        <taxon>Methanococcales</taxon>
        <taxon>Methanococcaceae</taxon>
        <taxon>Methanococcus</taxon>
    </lineage>
</organism>
<protein>
    <recommendedName>
        <fullName evidence="1">Proteasome-activating nucleotidase</fullName>
        <shortName evidence="1">PAN</shortName>
    </recommendedName>
    <alternativeName>
        <fullName evidence="1">Proteasomal ATPase</fullName>
    </alternativeName>
    <alternativeName>
        <fullName evidence="1">Proteasome regulatory ATPase</fullName>
    </alternativeName>
    <alternativeName>
        <fullName evidence="1">Proteasome regulatory particle</fullName>
    </alternativeName>
</protein>
<keyword id="KW-0067">ATP-binding</keyword>
<keyword id="KW-0143">Chaperone</keyword>
<keyword id="KW-0175">Coiled coil</keyword>
<keyword id="KW-0963">Cytoplasm</keyword>
<keyword id="KW-0547">Nucleotide-binding</keyword>
<keyword id="KW-0647">Proteasome</keyword>
<feature type="chain" id="PRO_1000017925" description="Proteasome-activating nucleotidase">
    <location>
        <begin position="1"/>
        <end position="407"/>
    </location>
</feature>
<feature type="region of interest" description="Docks into pockets in the proteasome alpha-ring to cause gate opening" evidence="1">
    <location>
        <begin position="405"/>
        <end position="407"/>
    </location>
</feature>
<feature type="coiled-coil region" evidence="1">
    <location>
        <begin position="22"/>
        <end position="67"/>
    </location>
</feature>
<feature type="binding site" evidence="1">
    <location>
        <begin position="192"/>
        <end position="197"/>
    </location>
    <ligand>
        <name>ATP</name>
        <dbReference type="ChEBI" id="CHEBI:30616"/>
    </ligand>
</feature>
<feature type="binding site" evidence="1">
    <location>
        <position position="331"/>
    </location>
    <ligand>
        <name>ATP</name>
        <dbReference type="ChEBI" id="CHEBI:30616"/>
    </ligand>
</feature>
<gene>
    <name evidence="1" type="primary">pan</name>
    <name type="ordered locus">Mevan_0952</name>
</gene>
<evidence type="ECO:0000255" key="1">
    <source>
        <dbReference type="HAMAP-Rule" id="MF_00553"/>
    </source>
</evidence>
<dbReference type="EMBL" id="CP000742">
    <property type="protein sequence ID" value="ABR54855.1"/>
    <property type="molecule type" value="Genomic_DNA"/>
</dbReference>
<dbReference type="RefSeq" id="WP_012065784.1">
    <property type="nucleotide sequence ID" value="NC_009634.1"/>
</dbReference>
<dbReference type="SMR" id="A6UQT3"/>
<dbReference type="STRING" id="406327.Mevan_0952"/>
<dbReference type="GeneID" id="5325964"/>
<dbReference type="KEGG" id="mvn:Mevan_0952"/>
<dbReference type="eggNOG" id="arCOG01306">
    <property type="taxonomic scope" value="Archaea"/>
</dbReference>
<dbReference type="HOGENOM" id="CLU_000688_2_0_2"/>
<dbReference type="OrthoDB" id="77269at2157"/>
<dbReference type="Proteomes" id="UP000001107">
    <property type="component" value="Chromosome"/>
</dbReference>
<dbReference type="GO" id="GO:0005737">
    <property type="term" value="C:cytoplasm"/>
    <property type="evidence" value="ECO:0007669"/>
    <property type="project" value="UniProtKB-SubCell"/>
</dbReference>
<dbReference type="GO" id="GO:0022623">
    <property type="term" value="C:proteasome-activating nucleotidase complex"/>
    <property type="evidence" value="ECO:0007669"/>
    <property type="project" value="UniProtKB-UniRule"/>
</dbReference>
<dbReference type="GO" id="GO:0005524">
    <property type="term" value="F:ATP binding"/>
    <property type="evidence" value="ECO:0007669"/>
    <property type="project" value="UniProtKB-UniRule"/>
</dbReference>
<dbReference type="GO" id="GO:0016887">
    <property type="term" value="F:ATP hydrolysis activity"/>
    <property type="evidence" value="ECO:0007669"/>
    <property type="project" value="UniProtKB-UniRule"/>
</dbReference>
<dbReference type="GO" id="GO:0010498">
    <property type="term" value="P:proteasomal protein catabolic process"/>
    <property type="evidence" value="ECO:0007669"/>
    <property type="project" value="UniProtKB-UniRule"/>
</dbReference>
<dbReference type="GO" id="GO:0043335">
    <property type="term" value="P:protein unfolding"/>
    <property type="evidence" value="ECO:0007669"/>
    <property type="project" value="UniProtKB-UniRule"/>
</dbReference>
<dbReference type="CDD" id="cd19502">
    <property type="entry name" value="RecA-like_PAN_like"/>
    <property type="match status" value="1"/>
</dbReference>
<dbReference type="FunFam" id="3.40.50.300:FF:000033">
    <property type="entry name" value="26S protease regulatory subunit 6B"/>
    <property type="match status" value="1"/>
</dbReference>
<dbReference type="FunFam" id="1.10.8.60:FF:000006">
    <property type="entry name" value="26S protease regulatory subunit 8"/>
    <property type="match status" value="1"/>
</dbReference>
<dbReference type="Gene3D" id="1.10.8.60">
    <property type="match status" value="1"/>
</dbReference>
<dbReference type="Gene3D" id="2.40.50.140">
    <property type="entry name" value="Nucleic acid-binding proteins"/>
    <property type="match status" value="1"/>
</dbReference>
<dbReference type="Gene3D" id="3.40.50.300">
    <property type="entry name" value="P-loop containing nucleotide triphosphate hydrolases"/>
    <property type="match status" value="1"/>
</dbReference>
<dbReference type="HAMAP" id="MF_00553">
    <property type="entry name" value="PAN"/>
    <property type="match status" value="1"/>
</dbReference>
<dbReference type="InterPro" id="IPR050221">
    <property type="entry name" value="26S_Proteasome_ATPase"/>
</dbReference>
<dbReference type="InterPro" id="IPR003593">
    <property type="entry name" value="AAA+_ATPase"/>
</dbReference>
<dbReference type="InterPro" id="IPR041569">
    <property type="entry name" value="AAA_lid_3"/>
</dbReference>
<dbReference type="InterPro" id="IPR003959">
    <property type="entry name" value="ATPase_AAA_core"/>
</dbReference>
<dbReference type="InterPro" id="IPR003960">
    <property type="entry name" value="ATPase_AAA_CS"/>
</dbReference>
<dbReference type="InterPro" id="IPR012340">
    <property type="entry name" value="NA-bd_OB-fold"/>
</dbReference>
<dbReference type="InterPro" id="IPR023501">
    <property type="entry name" value="Nucleotidase_PAN"/>
</dbReference>
<dbReference type="InterPro" id="IPR027417">
    <property type="entry name" value="P-loop_NTPase"/>
</dbReference>
<dbReference type="InterPro" id="IPR032501">
    <property type="entry name" value="Prot_ATP_ID_OB_2nd"/>
</dbReference>
<dbReference type="NCBIfam" id="NF003069">
    <property type="entry name" value="PRK03992.1"/>
    <property type="match status" value="1"/>
</dbReference>
<dbReference type="NCBIfam" id="TIGR01242">
    <property type="entry name" value="proteasome-activating nucleotidase"/>
    <property type="match status" value="1"/>
</dbReference>
<dbReference type="PANTHER" id="PTHR23073">
    <property type="entry name" value="26S PROTEASOME REGULATORY SUBUNIT"/>
    <property type="match status" value="1"/>
</dbReference>
<dbReference type="Pfam" id="PF00004">
    <property type="entry name" value="AAA"/>
    <property type="match status" value="1"/>
</dbReference>
<dbReference type="Pfam" id="PF17862">
    <property type="entry name" value="AAA_lid_3"/>
    <property type="match status" value="1"/>
</dbReference>
<dbReference type="Pfam" id="PF16450">
    <property type="entry name" value="Prot_ATP_ID_OB_C"/>
    <property type="match status" value="1"/>
</dbReference>
<dbReference type="SMART" id="SM00382">
    <property type="entry name" value="AAA"/>
    <property type="match status" value="1"/>
</dbReference>
<dbReference type="SUPFAM" id="SSF52540">
    <property type="entry name" value="P-loop containing nucleoside triphosphate hydrolases"/>
    <property type="match status" value="1"/>
</dbReference>
<dbReference type="PROSITE" id="PS00674">
    <property type="entry name" value="AAA"/>
    <property type="match status" value="1"/>
</dbReference>
<proteinExistence type="inferred from homology"/>
<sequence>MTYPDDYSTDVQKNEMDLKEFKEKAYLAELESKVLRLELKNKDITRENVQIKKENEILKRELDKLRIPPLILGTVLDRVNERKAVVKSSTGPNFLVNLSQFVEPDDIVPGARVCLNQQTLAVVEVLPKEKDYRAMAMELEEKPDILFGDIGGLNNQIRDIKEVVELPLKNPELFEKVGIVPPKGVLLYGPPGTGKTLLAKAVARETNASFVRVVGSELVKKFIGEGAKLVRDVFKLAKEKSPCIIFIDEIDAVASKRTESLTGGDREVQRTLMQLLAEMDGFDSRGDVKIIAATNRPDILDPAILRPGRFDRIIEIAAPDEDGRLEIFKIHTDKMNIKSVDLREIAKMAENMVGADIKAVCTEAGMFAIREGREYVTTKDFKEALLKVTGKKEKSEEGIAHLTTMYG</sequence>